<comment type="function">
    <text evidence="1">Component of the cytochrome b6-f complex, which mediates electron transfer between photosystem II (PSII) and photosystem I (PSI), cyclic electron flow around PSI, and state transitions. PetG is required for either the stability or assembly of the cytochrome b6-f complex.</text>
</comment>
<comment type="subunit">
    <text evidence="1">The 4 large subunits of the cytochrome b6-f complex are cytochrome b6, subunit IV (17 kDa polypeptide, PetD), cytochrome f and the Rieske protein, while the 4 small subunits are PetG, PetL, PetM and PetN. The complex functions as a dimer.</text>
</comment>
<comment type="subcellular location">
    <subcellularLocation>
        <location evidence="1">Cellular thylakoid membrane</location>
        <topology evidence="1">Single-pass membrane protein</topology>
    </subcellularLocation>
</comment>
<comment type="similarity">
    <text evidence="1">Belongs to the PetG family.</text>
</comment>
<gene>
    <name evidence="1" type="primary">petG</name>
    <name type="ordered locus">Synpcc7942_1479</name>
</gene>
<protein>
    <recommendedName>
        <fullName evidence="1">Cytochrome b6-f complex subunit 5</fullName>
    </recommendedName>
    <alternativeName>
        <fullName evidence="1">Cytochrome b6-f complex subunit PetG</fullName>
    </alternativeName>
    <alternativeName>
        <fullName evidence="1">Cytochrome b6-f complex subunit V</fullName>
    </alternativeName>
</protein>
<keyword id="KW-0249">Electron transport</keyword>
<keyword id="KW-0472">Membrane</keyword>
<keyword id="KW-0602">Photosynthesis</keyword>
<keyword id="KW-1185">Reference proteome</keyword>
<keyword id="KW-0793">Thylakoid</keyword>
<keyword id="KW-0812">Transmembrane</keyword>
<keyword id="KW-1133">Transmembrane helix</keyword>
<keyword id="KW-0813">Transport</keyword>
<sequence length="37" mass="3991">MIEPLLCGIVLGLIPITLAGLFMAAYLQYRRGNQLGA</sequence>
<organism>
    <name type="scientific">Synechococcus elongatus (strain ATCC 33912 / PCC 7942 / FACHB-805)</name>
    <name type="common">Anacystis nidulans R2</name>
    <dbReference type="NCBI Taxonomy" id="1140"/>
    <lineage>
        <taxon>Bacteria</taxon>
        <taxon>Bacillati</taxon>
        <taxon>Cyanobacteriota</taxon>
        <taxon>Cyanophyceae</taxon>
        <taxon>Synechococcales</taxon>
        <taxon>Synechococcaceae</taxon>
        <taxon>Synechococcus</taxon>
    </lineage>
</organism>
<feature type="chain" id="PRO_0000216416" description="Cytochrome b6-f complex subunit 5">
    <location>
        <begin position="1"/>
        <end position="37"/>
    </location>
</feature>
<feature type="transmembrane region" description="Helical" evidence="1">
    <location>
        <begin position="5"/>
        <end position="25"/>
    </location>
</feature>
<name>PETG_SYNE7</name>
<proteinExistence type="inferred from homology"/>
<reference key="1">
    <citation type="submission" date="1995-11" db="EMBL/GenBank/DDBJ databases">
        <authorList>
            <person name="Malakhov M.P."/>
            <person name="Murata N."/>
        </authorList>
    </citation>
    <scope>NUCLEOTIDE SEQUENCE [GENOMIC DNA]</scope>
</reference>
<reference key="2">
    <citation type="submission" date="2005-08" db="EMBL/GenBank/DDBJ databases">
        <title>Complete sequence of chromosome 1 of Synechococcus elongatus PCC 7942.</title>
        <authorList>
            <consortium name="US DOE Joint Genome Institute"/>
            <person name="Copeland A."/>
            <person name="Lucas S."/>
            <person name="Lapidus A."/>
            <person name="Barry K."/>
            <person name="Detter J.C."/>
            <person name="Glavina T."/>
            <person name="Hammon N."/>
            <person name="Israni S."/>
            <person name="Pitluck S."/>
            <person name="Schmutz J."/>
            <person name="Larimer F."/>
            <person name="Land M."/>
            <person name="Kyrpides N."/>
            <person name="Lykidis A."/>
            <person name="Golden S."/>
            <person name="Richardson P."/>
        </authorList>
    </citation>
    <scope>NUCLEOTIDE SEQUENCE [LARGE SCALE GENOMIC DNA]</scope>
    <source>
        <strain>ATCC 33912 / PCC 7942 / FACHB-805</strain>
    </source>
</reference>
<dbReference type="EMBL" id="U39811">
    <property type="protein sequence ID" value="AAD00005.1"/>
    <property type="molecule type" value="Genomic_DNA"/>
</dbReference>
<dbReference type="EMBL" id="CP000100">
    <property type="protein sequence ID" value="ABB57509.1"/>
    <property type="molecule type" value="Genomic_DNA"/>
</dbReference>
<dbReference type="RefSeq" id="WP_011378050.1">
    <property type="nucleotide sequence ID" value="NZ_JACJTX010000004.1"/>
</dbReference>
<dbReference type="SMR" id="Q9Z3G1"/>
<dbReference type="STRING" id="1140.Synpcc7942_1479"/>
<dbReference type="PaxDb" id="1140-Synpcc7942_1479"/>
<dbReference type="GeneID" id="72430488"/>
<dbReference type="KEGG" id="syf:Synpcc7942_1479"/>
<dbReference type="eggNOG" id="ENOG5033BE9">
    <property type="taxonomic scope" value="Bacteria"/>
</dbReference>
<dbReference type="HOGENOM" id="CLU_216962_0_0_3"/>
<dbReference type="OrthoDB" id="428448at2"/>
<dbReference type="BioCyc" id="MetaCyc:SYNPCC7942_1479-MONOMER"/>
<dbReference type="BioCyc" id="SYNEL:SYNPCC7942_1479-MONOMER"/>
<dbReference type="Proteomes" id="UP000889800">
    <property type="component" value="Chromosome"/>
</dbReference>
<dbReference type="GO" id="GO:0009512">
    <property type="term" value="C:cytochrome b6f complex"/>
    <property type="evidence" value="ECO:0007669"/>
    <property type="project" value="InterPro"/>
</dbReference>
<dbReference type="GO" id="GO:0031676">
    <property type="term" value="C:plasma membrane-derived thylakoid membrane"/>
    <property type="evidence" value="ECO:0007669"/>
    <property type="project" value="UniProtKB-SubCell"/>
</dbReference>
<dbReference type="GO" id="GO:0045158">
    <property type="term" value="F:electron transporter, transferring electrons within cytochrome b6/f complex of photosystem II activity"/>
    <property type="evidence" value="ECO:0007669"/>
    <property type="project" value="UniProtKB-UniRule"/>
</dbReference>
<dbReference type="GO" id="GO:0017004">
    <property type="term" value="P:cytochrome complex assembly"/>
    <property type="evidence" value="ECO:0007669"/>
    <property type="project" value="UniProtKB-UniRule"/>
</dbReference>
<dbReference type="GO" id="GO:0015979">
    <property type="term" value="P:photosynthesis"/>
    <property type="evidence" value="ECO:0007669"/>
    <property type="project" value="UniProtKB-KW"/>
</dbReference>
<dbReference type="HAMAP" id="MF_00432">
    <property type="entry name" value="Cytb6_f_PetG"/>
    <property type="match status" value="1"/>
</dbReference>
<dbReference type="InterPro" id="IPR003683">
    <property type="entry name" value="Cyt_6/f_cplx_su5"/>
</dbReference>
<dbReference type="InterPro" id="IPR036099">
    <property type="entry name" value="Cyt_6/f_cplx_su5_sf"/>
</dbReference>
<dbReference type="NCBIfam" id="NF001907">
    <property type="entry name" value="PRK00665.1"/>
    <property type="match status" value="1"/>
</dbReference>
<dbReference type="Pfam" id="PF02529">
    <property type="entry name" value="PetG"/>
    <property type="match status" value="1"/>
</dbReference>
<dbReference type="PIRSF" id="PIRSF000034">
    <property type="entry name" value="Cyt_b6-f_V"/>
    <property type="match status" value="1"/>
</dbReference>
<dbReference type="SUPFAM" id="SSF103446">
    <property type="entry name" value="PetG subunit of the cytochrome b6f complex"/>
    <property type="match status" value="1"/>
</dbReference>
<evidence type="ECO:0000255" key="1">
    <source>
        <dbReference type="HAMAP-Rule" id="MF_00432"/>
    </source>
</evidence>
<accession>Q9Z3G1</accession>
<accession>Q31N60</accession>